<evidence type="ECO:0000255" key="1">
    <source>
        <dbReference type="HAMAP-Rule" id="MF_01666"/>
    </source>
</evidence>
<keyword id="KW-0963">Cytoplasm</keyword>
<keyword id="KW-0520">NAD</keyword>
<keyword id="KW-0521">NADP</keyword>
<keyword id="KW-0560">Oxidoreductase</keyword>
<dbReference type="EC" id="1.1.1.79" evidence="1"/>
<dbReference type="EC" id="1.1.1.81" evidence="1"/>
<dbReference type="EMBL" id="FM200053">
    <property type="protein sequence ID" value="CAR59783.1"/>
    <property type="molecule type" value="Genomic_DNA"/>
</dbReference>
<dbReference type="RefSeq" id="WP_000402552.1">
    <property type="nucleotide sequence ID" value="NC_011147.1"/>
</dbReference>
<dbReference type="SMR" id="B5BBF3"/>
<dbReference type="KEGG" id="sek:SSPA1596"/>
<dbReference type="HOGENOM" id="CLU_019796_1_0_6"/>
<dbReference type="Proteomes" id="UP000001869">
    <property type="component" value="Chromosome"/>
</dbReference>
<dbReference type="GO" id="GO:0005737">
    <property type="term" value="C:cytoplasm"/>
    <property type="evidence" value="ECO:0007669"/>
    <property type="project" value="UniProtKB-SubCell"/>
</dbReference>
<dbReference type="GO" id="GO:0030267">
    <property type="term" value="F:glyoxylate reductase (NADPH) activity"/>
    <property type="evidence" value="ECO:0007669"/>
    <property type="project" value="UniProtKB-UniRule"/>
</dbReference>
<dbReference type="GO" id="GO:0008465">
    <property type="term" value="F:hydroxypyruvate reductase (NADH) activity"/>
    <property type="evidence" value="ECO:0007669"/>
    <property type="project" value="RHEA"/>
</dbReference>
<dbReference type="GO" id="GO:0120509">
    <property type="term" value="F:hydroxypyruvate reductase (NADPH) activity"/>
    <property type="evidence" value="ECO:0007669"/>
    <property type="project" value="RHEA"/>
</dbReference>
<dbReference type="GO" id="GO:0051287">
    <property type="term" value="F:NAD binding"/>
    <property type="evidence" value="ECO:0007669"/>
    <property type="project" value="InterPro"/>
</dbReference>
<dbReference type="CDD" id="cd12164">
    <property type="entry name" value="GDH_like_2"/>
    <property type="match status" value="1"/>
</dbReference>
<dbReference type="FunFam" id="3.40.50.720:FF:000110">
    <property type="entry name" value="Glyoxylate/hydroxypyruvate reductase A"/>
    <property type="match status" value="1"/>
</dbReference>
<dbReference type="Gene3D" id="3.40.50.720">
    <property type="entry name" value="NAD(P)-binding Rossmann-like Domain"/>
    <property type="match status" value="2"/>
</dbReference>
<dbReference type="HAMAP" id="MF_01666">
    <property type="entry name" value="2_Hacid_dh_C_GhrA"/>
    <property type="match status" value="1"/>
</dbReference>
<dbReference type="InterPro" id="IPR006140">
    <property type="entry name" value="D-isomer_DH_NAD-bd"/>
</dbReference>
<dbReference type="InterPro" id="IPR023514">
    <property type="entry name" value="GhrA_Enterobacterales"/>
</dbReference>
<dbReference type="InterPro" id="IPR036291">
    <property type="entry name" value="NAD(P)-bd_dom_sf"/>
</dbReference>
<dbReference type="NCBIfam" id="NF012013">
    <property type="entry name" value="PRK15469.1"/>
    <property type="match status" value="1"/>
</dbReference>
<dbReference type="PANTHER" id="PTHR43333">
    <property type="entry name" value="2-HACID_DH_C DOMAIN-CONTAINING PROTEIN"/>
    <property type="match status" value="1"/>
</dbReference>
<dbReference type="PANTHER" id="PTHR43333:SF1">
    <property type="entry name" value="D-ISOMER SPECIFIC 2-HYDROXYACID DEHYDROGENASE NAD-BINDING DOMAIN-CONTAINING PROTEIN"/>
    <property type="match status" value="1"/>
</dbReference>
<dbReference type="Pfam" id="PF02826">
    <property type="entry name" value="2-Hacid_dh_C"/>
    <property type="match status" value="1"/>
</dbReference>
<dbReference type="SUPFAM" id="SSF51735">
    <property type="entry name" value="NAD(P)-binding Rossmann-fold domains"/>
    <property type="match status" value="1"/>
</dbReference>
<protein>
    <recommendedName>
        <fullName evidence="1">Glyoxylate/hydroxypyruvate reductase A</fullName>
        <ecNumber evidence="1">1.1.1.79</ecNumber>
        <ecNumber evidence="1">1.1.1.81</ecNumber>
    </recommendedName>
    <alternativeName>
        <fullName evidence="1">2-ketoacid reductase</fullName>
    </alternativeName>
</protein>
<gene>
    <name evidence="1" type="primary">ghrA</name>
    <name type="ordered locus">SSPA1596</name>
</gene>
<organism>
    <name type="scientific">Salmonella paratyphi A (strain AKU_12601)</name>
    <dbReference type="NCBI Taxonomy" id="554290"/>
    <lineage>
        <taxon>Bacteria</taxon>
        <taxon>Pseudomonadati</taxon>
        <taxon>Pseudomonadota</taxon>
        <taxon>Gammaproteobacteria</taxon>
        <taxon>Enterobacterales</taxon>
        <taxon>Enterobacteriaceae</taxon>
        <taxon>Salmonella</taxon>
    </lineage>
</organism>
<accession>B5BBF3</accession>
<comment type="function">
    <text evidence="1">Catalyzes the NADPH-dependent reduction of glyoxylate and hydroxypyruvate into glycolate and glycerate, respectively.</text>
</comment>
<comment type="catalytic activity">
    <reaction evidence="1">
        <text>glycolate + NADP(+) = glyoxylate + NADPH + H(+)</text>
        <dbReference type="Rhea" id="RHEA:10992"/>
        <dbReference type="ChEBI" id="CHEBI:15378"/>
        <dbReference type="ChEBI" id="CHEBI:29805"/>
        <dbReference type="ChEBI" id="CHEBI:36655"/>
        <dbReference type="ChEBI" id="CHEBI:57783"/>
        <dbReference type="ChEBI" id="CHEBI:58349"/>
        <dbReference type="EC" id="1.1.1.79"/>
    </reaction>
</comment>
<comment type="catalytic activity">
    <reaction evidence="1">
        <text>(R)-glycerate + NAD(+) = 3-hydroxypyruvate + NADH + H(+)</text>
        <dbReference type="Rhea" id="RHEA:17905"/>
        <dbReference type="ChEBI" id="CHEBI:15378"/>
        <dbReference type="ChEBI" id="CHEBI:16659"/>
        <dbReference type="ChEBI" id="CHEBI:17180"/>
        <dbReference type="ChEBI" id="CHEBI:57540"/>
        <dbReference type="ChEBI" id="CHEBI:57945"/>
        <dbReference type="EC" id="1.1.1.81"/>
    </reaction>
</comment>
<comment type="catalytic activity">
    <reaction evidence="1">
        <text>(R)-glycerate + NADP(+) = 3-hydroxypyruvate + NADPH + H(+)</text>
        <dbReference type="Rhea" id="RHEA:18657"/>
        <dbReference type="ChEBI" id="CHEBI:15378"/>
        <dbReference type="ChEBI" id="CHEBI:16659"/>
        <dbReference type="ChEBI" id="CHEBI:17180"/>
        <dbReference type="ChEBI" id="CHEBI:57783"/>
        <dbReference type="ChEBI" id="CHEBI:58349"/>
        <dbReference type="EC" id="1.1.1.81"/>
    </reaction>
</comment>
<comment type="subcellular location">
    <subcellularLocation>
        <location evidence="1">Cytoplasm</location>
    </subcellularLocation>
</comment>
<comment type="similarity">
    <text evidence="1">Belongs to the D-isomer specific 2-hydroxyacid dehydrogenase family. GhrA subfamily.</text>
</comment>
<feature type="chain" id="PRO_1000187280" description="Glyoxylate/hydroxypyruvate reductase A">
    <location>
        <begin position="1"/>
        <end position="312"/>
    </location>
</feature>
<feature type="active site" evidence="1">
    <location>
        <position position="227"/>
    </location>
</feature>
<feature type="active site" description="Proton donor" evidence="1">
    <location>
        <position position="275"/>
    </location>
</feature>
<sequence length="312" mass="35006">MEIIFYHPTFNAAWWVNALEKALPHARVREWKVGDNNPADYALVWQPPVEMLAGRRLKAVFALGAGVDAILSKLNAHPEMLDASIPLFRLEDTGMGLQMQEYAVSQVLHWFRRFDDYQALKNQALWKPLPEYTREEFSVGIMGAGVLGAKVAESLQAWGFPLRCWSRSRKSWPGVESYVGREELRAFLNQTRVLINLLPNTAQTVGIINSELLDQLPDGAYVLNLARGVHVQEADLLAALDSGKLKGAMLDVFSQEPLPQESPLWRHPRVAMTPHIAAVTRPAEAIDYISRTITQLEKGEPVTGQVDRARGY</sequence>
<proteinExistence type="inferred from homology"/>
<name>GHRA_SALPK</name>
<reference key="1">
    <citation type="journal article" date="2009" name="BMC Genomics">
        <title>Pseudogene accumulation in the evolutionary histories of Salmonella enterica serovars Paratyphi A and Typhi.</title>
        <authorList>
            <person name="Holt K.E."/>
            <person name="Thomson N.R."/>
            <person name="Wain J."/>
            <person name="Langridge G.C."/>
            <person name="Hasan R."/>
            <person name="Bhutta Z.A."/>
            <person name="Quail M.A."/>
            <person name="Norbertczak H."/>
            <person name="Walker D."/>
            <person name="Simmonds M."/>
            <person name="White B."/>
            <person name="Bason N."/>
            <person name="Mungall K."/>
            <person name="Dougan G."/>
            <person name="Parkhill J."/>
        </authorList>
    </citation>
    <scope>NUCLEOTIDE SEQUENCE [LARGE SCALE GENOMIC DNA]</scope>
    <source>
        <strain>AKU_12601</strain>
    </source>
</reference>